<organism>
    <name type="scientific">Leptospira borgpetersenii serovar Hardjo-bovis (strain L550)</name>
    <dbReference type="NCBI Taxonomy" id="355276"/>
    <lineage>
        <taxon>Bacteria</taxon>
        <taxon>Pseudomonadati</taxon>
        <taxon>Spirochaetota</taxon>
        <taxon>Spirochaetia</taxon>
        <taxon>Leptospirales</taxon>
        <taxon>Leptospiraceae</taxon>
        <taxon>Leptospira</taxon>
    </lineage>
</organism>
<gene>
    <name evidence="1" type="primary">rplA</name>
    <name type="ordered locus">LBL_0740</name>
</gene>
<keyword id="KW-0678">Repressor</keyword>
<keyword id="KW-0687">Ribonucleoprotein</keyword>
<keyword id="KW-0689">Ribosomal protein</keyword>
<keyword id="KW-0694">RNA-binding</keyword>
<keyword id="KW-0699">rRNA-binding</keyword>
<keyword id="KW-0810">Translation regulation</keyword>
<keyword id="KW-0820">tRNA-binding</keyword>
<dbReference type="EMBL" id="CP000348">
    <property type="protein sequence ID" value="ABJ78300.1"/>
    <property type="molecule type" value="Genomic_DNA"/>
</dbReference>
<dbReference type="RefSeq" id="WP_011669619.1">
    <property type="nucleotide sequence ID" value="NC_008508.1"/>
</dbReference>
<dbReference type="SMR" id="Q054E5"/>
<dbReference type="KEGG" id="lbl:LBL_0740"/>
<dbReference type="HOGENOM" id="CLU_062853_0_0_12"/>
<dbReference type="GO" id="GO:0015934">
    <property type="term" value="C:large ribosomal subunit"/>
    <property type="evidence" value="ECO:0007669"/>
    <property type="project" value="InterPro"/>
</dbReference>
<dbReference type="GO" id="GO:0019843">
    <property type="term" value="F:rRNA binding"/>
    <property type="evidence" value="ECO:0007669"/>
    <property type="project" value="UniProtKB-UniRule"/>
</dbReference>
<dbReference type="GO" id="GO:0003735">
    <property type="term" value="F:structural constituent of ribosome"/>
    <property type="evidence" value="ECO:0007669"/>
    <property type="project" value="InterPro"/>
</dbReference>
<dbReference type="GO" id="GO:0000049">
    <property type="term" value="F:tRNA binding"/>
    <property type="evidence" value="ECO:0007669"/>
    <property type="project" value="UniProtKB-KW"/>
</dbReference>
<dbReference type="GO" id="GO:0006417">
    <property type="term" value="P:regulation of translation"/>
    <property type="evidence" value="ECO:0007669"/>
    <property type="project" value="UniProtKB-KW"/>
</dbReference>
<dbReference type="GO" id="GO:0006412">
    <property type="term" value="P:translation"/>
    <property type="evidence" value="ECO:0007669"/>
    <property type="project" value="UniProtKB-UniRule"/>
</dbReference>
<dbReference type="CDD" id="cd00403">
    <property type="entry name" value="Ribosomal_L1"/>
    <property type="match status" value="1"/>
</dbReference>
<dbReference type="FunFam" id="3.40.50.790:FF:000001">
    <property type="entry name" value="50S ribosomal protein L1"/>
    <property type="match status" value="1"/>
</dbReference>
<dbReference type="Gene3D" id="3.30.190.20">
    <property type="match status" value="1"/>
</dbReference>
<dbReference type="Gene3D" id="3.40.50.790">
    <property type="match status" value="1"/>
</dbReference>
<dbReference type="HAMAP" id="MF_01318_B">
    <property type="entry name" value="Ribosomal_uL1_B"/>
    <property type="match status" value="1"/>
</dbReference>
<dbReference type="InterPro" id="IPR005878">
    <property type="entry name" value="Ribosom_uL1_bac-type"/>
</dbReference>
<dbReference type="InterPro" id="IPR002143">
    <property type="entry name" value="Ribosomal_uL1"/>
</dbReference>
<dbReference type="InterPro" id="IPR023674">
    <property type="entry name" value="Ribosomal_uL1-like"/>
</dbReference>
<dbReference type="InterPro" id="IPR028364">
    <property type="entry name" value="Ribosomal_uL1/biogenesis"/>
</dbReference>
<dbReference type="InterPro" id="IPR016095">
    <property type="entry name" value="Ribosomal_uL1_3-a/b-sand"/>
</dbReference>
<dbReference type="InterPro" id="IPR023673">
    <property type="entry name" value="Ribosomal_uL1_CS"/>
</dbReference>
<dbReference type="NCBIfam" id="TIGR01169">
    <property type="entry name" value="rplA_bact"/>
    <property type="match status" value="1"/>
</dbReference>
<dbReference type="PANTHER" id="PTHR36427">
    <property type="entry name" value="54S RIBOSOMAL PROTEIN L1, MITOCHONDRIAL"/>
    <property type="match status" value="1"/>
</dbReference>
<dbReference type="PANTHER" id="PTHR36427:SF3">
    <property type="entry name" value="LARGE RIBOSOMAL SUBUNIT PROTEIN UL1M"/>
    <property type="match status" value="1"/>
</dbReference>
<dbReference type="Pfam" id="PF00687">
    <property type="entry name" value="Ribosomal_L1"/>
    <property type="match status" value="1"/>
</dbReference>
<dbReference type="PIRSF" id="PIRSF002155">
    <property type="entry name" value="Ribosomal_L1"/>
    <property type="match status" value="1"/>
</dbReference>
<dbReference type="SUPFAM" id="SSF56808">
    <property type="entry name" value="Ribosomal protein L1"/>
    <property type="match status" value="1"/>
</dbReference>
<dbReference type="PROSITE" id="PS01199">
    <property type="entry name" value="RIBOSOMAL_L1"/>
    <property type="match status" value="1"/>
</dbReference>
<feature type="chain" id="PRO_0000308038" description="Large ribosomal subunit protein uL1">
    <location>
        <begin position="1"/>
        <end position="230"/>
    </location>
</feature>
<evidence type="ECO:0000255" key="1">
    <source>
        <dbReference type="HAMAP-Rule" id="MF_01318"/>
    </source>
</evidence>
<evidence type="ECO:0000305" key="2"/>
<reference key="1">
    <citation type="journal article" date="2006" name="Proc. Natl. Acad. Sci. U.S.A.">
        <title>Genome reduction in Leptospira borgpetersenii reflects limited transmission potential.</title>
        <authorList>
            <person name="Bulach D.M."/>
            <person name="Zuerner R.L."/>
            <person name="Wilson P."/>
            <person name="Seemann T."/>
            <person name="McGrath A."/>
            <person name="Cullen P.A."/>
            <person name="Davis J."/>
            <person name="Johnson M."/>
            <person name="Kuczek E."/>
            <person name="Alt D.P."/>
            <person name="Peterson-Burch B."/>
            <person name="Coppel R.L."/>
            <person name="Rood J.I."/>
            <person name="Davies J.K."/>
            <person name="Adler B."/>
        </authorList>
    </citation>
    <scope>NUCLEOTIDE SEQUENCE [LARGE SCALE GENOMIC DNA]</scope>
    <source>
        <strain>L550</strain>
    </source>
</reference>
<name>RL1_LEPBL</name>
<accession>Q054E5</accession>
<comment type="function">
    <text evidence="1">Binds directly to 23S rRNA. The L1 stalk is quite mobile in the ribosome, and is involved in E site tRNA release.</text>
</comment>
<comment type="function">
    <text evidence="1">Protein L1 is also a translational repressor protein, it controls the translation of the L11 operon by binding to its mRNA.</text>
</comment>
<comment type="subunit">
    <text evidence="1">Part of the 50S ribosomal subunit.</text>
</comment>
<comment type="similarity">
    <text evidence="1">Belongs to the universal ribosomal protein uL1 family.</text>
</comment>
<proteinExistence type="inferred from homology"/>
<protein>
    <recommendedName>
        <fullName evidence="1">Large ribosomal subunit protein uL1</fullName>
    </recommendedName>
    <alternativeName>
        <fullName evidence="2">50S ribosomal protein L1</fullName>
    </alternativeName>
</protein>
<sequence length="230" mass="24901">MQRGKKYKALKEKVDSTKFFNIDQAVELAKSTSYTKFDGTVEIATKVNYKSLQNIRGTISLPHGNGKKVRVLVFCKGDKQNDAKAAGAEFVGDMDLIEKVAGGWTDFDACVATPDMMKDVGKLGPILGRKGLMPKPKAGTVTTDVAKAVNELKSGRVEYRPDKGGVVHLGVGKVSFDNAKLVENIRTVVQTLMRDKPSDAKGDYLKTFSVSPTMGVGVKVDVKELVNTSI</sequence>